<keyword id="KW-0328">Glycosyltransferase</keyword>
<keyword id="KW-0479">Metal-binding</keyword>
<keyword id="KW-0671">Queuosine biosynthesis</keyword>
<keyword id="KW-1185">Reference proteome</keyword>
<keyword id="KW-0808">Transferase</keyword>
<keyword id="KW-0819">tRNA processing</keyword>
<keyword id="KW-0862">Zinc</keyword>
<gene>
    <name evidence="1" type="primary">tgt</name>
    <name type="ordered locus">P9301_02941</name>
</gene>
<name>TGT_PROM0</name>
<protein>
    <recommendedName>
        <fullName evidence="1">Queuine tRNA-ribosyltransferase</fullName>
        <ecNumber evidence="1">2.4.2.29</ecNumber>
    </recommendedName>
    <alternativeName>
        <fullName evidence="1">Guanine insertion enzyme</fullName>
    </alternativeName>
    <alternativeName>
        <fullName evidence="1">tRNA-guanine transglycosylase</fullName>
    </alternativeName>
</protein>
<feature type="chain" id="PRO_1000016822" description="Queuine tRNA-ribosyltransferase">
    <location>
        <begin position="1"/>
        <end position="372"/>
    </location>
</feature>
<feature type="region of interest" description="RNA binding" evidence="1">
    <location>
        <begin position="246"/>
        <end position="252"/>
    </location>
</feature>
<feature type="region of interest" description="RNA binding; important for wobble base 34 recognition" evidence="1">
    <location>
        <begin position="270"/>
        <end position="274"/>
    </location>
</feature>
<feature type="active site" description="Proton acceptor" evidence="1">
    <location>
        <position position="92"/>
    </location>
</feature>
<feature type="active site" description="Nucleophile" evidence="1">
    <location>
        <position position="265"/>
    </location>
</feature>
<feature type="binding site" evidence="1">
    <location>
        <begin position="92"/>
        <end position="96"/>
    </location>
    <ligand>
        <name>substrate</name>
    </ligand>
</feature>
<feature type="binding site" evidence="1">
    <location>
        <position position="146"/>
    </location>
    <ligand>
        <name>substrate</name>
    </ligand>
</feature>
<feature type="binding site" evidence="1">
    <location>
        <position position="188"/>
    </location>
    <ligand>
        <name>substrate</name>
    </ligand>
</feature>
<feature type="binding site" evidence="1">
    <location>
        <position position="215"/>
    </location>
    <ligand>
        <name>substrate</name>
    </ligand>
</feature>
<feature type="binding site" evidence="1">
    <location>
        <position position="303"/>
    </location>
    <ligand>
        <name>Zn(2+)</name>
        <dbReference type="ChEBI" id="CHEBI:29105"/>
    </ligand>
</feature>
<feature type="binding site" evidence="1">
    <location>
        <position position="305"/>
    </location>
    <ligand>
        <name>Zn(2+)</name>
        <dbReference type="ChEBI" id="CHEBI:29105"/>
    </ligand>
</feature>
<feature type="binding site" evidence="1">
    <location>
        <position position="308"/>
    </location>
    <ligand>
        <name>Zn(2+)</name>
        <dbReference type="ChEBI" id="CHEBI:29105"/>
    </ligand>
</feature>
<feature type="binding site" evidence="1">
    <location>
        <position position="334"/>
    </location>
    <ligand>
        <name>Zn(2+)</name>
        <dbReference type="ChEBI" id="CHEBI:29105"/>
    </ligand>
</feature>
<dbReference type="EC" id="2.4.2.29" evidence="1"/>
<dbReference type="EMBL" id="CP000576">
    <property type="protein sequence ID" value="ABO16917.1"/>
    <property type="molecule type" value="Genomic_DNA"/>
</dbReference>
<dbReference type="RefSeq" id="WP_011862311.1">
    <property type="nucleotide sequence ID" value="NC_009091.1"/>
</dbReference>
<dbReference type="SMR" id="A3PAZ2"/>
<dbReference type="STRING" id="167546.P9301_02941"/>
<dbReference type="KEGG" id="pmg:P9301_02941"/>
<dbReference type="eggNOG" id="COG0343">
    <property type="taxonomic scope" value="Bacteria"/>
</dbReference>
<dbReference type="HOGENOM" id="CLU_022060_0_1_3"/>
<dbReference type="OrthoDB" id="9805417at2"/>
<dbReference type="UniPathway" id="UPA00392"/>
<dbReference type="Proteomes" id="UP000001430">
    <property type="component" value="Chromosome"/>
</dbReference>
<dbReference type="GO" id="GO:0005829">
    <property type="term" value="C:cytosol"/>
    <property type="evidence" value="ECO:0007669"/>
    <property type="project" value="TreeGrafter"/>
</dbReference>
<dbReference type="GO" id="GO:0046872">
    <property type="term" value="F:metal ion binding"/>
    <property type="evidence" value="ECO:0007669"/>
    <property type="project" value="UniProtKB-KW"/>
</dbReference>
<dbReference type="GO" id="GO:0008479">
    <property type="term" value="F:tRNA-guanosine(34) queuine transglycosylase activity"/>
    <property type="evidence" value="ECO:0007669"/>
    <property type="project" value="UniProtKB-UniRule"/>
</dbReference>
<dbReference type="GO" id="GO:0008616">
    <property type="term" value="P:queuosine biosynthetic process"/>
    <property type="evidence" value="ECO:0007669"/>
    <property type="project" value="UniProtKB-UniRule"/>
</dbReference>
<dbReference type="GO" id="GO:0002099">
    <property type="term" value="P:tRNA wobble guanine modification"/>
    <property type="evidence" value="ECO:0007669"/>
    <property type="project" value="TreeGrafter"/>
</dbReference>
<dbReference type="GO" id="GO:0101030">
    <property type="term" value="P:tRNA-guanine transglycosylation"/>
    <property type="evidence" value="ECO:0007669"/>
    <property type="project" value="InterPro"/>
</dbReference>
<dbReference type="Gene3D" id="3.20.20.105">
    <property type="entry name" value="Queuine tRNA-ribosyltransferase-like"/>
    <property type="match status" value="1"/>
</dbReference>
<dbReference type="HAMAP" id="MF_00168">
    <property type="entry name" value="Q_tRNA_Tgt"/>
    <property type="match status" value="1"/>
</dbReference>
<dbReference type="InterPro" id="IPR050076">
    <property type="entry name" value="ArchSynthase1/Queuine_TRR"/>
</dbReference>
<dbReference type="InterPro" id="IPR004803">
    <property type="entry name" value="TGT"/>
</dbReference>
<dbReference type="InterPro" id="IPR036511">
    <property type="entry name" value="TGT-like_sf"/>
</dbReference>
<dbReference type="InterPro" id="IPR002616">
    <property type="entry name" value="tRNA_ribo_trans-like"/>
</dbReference>
<dbReference type="NCBIfam" id="TIGR00430">
    <property type="entry name" value="Q_tRNA_tgt"/>
    <property type="match status" value="1"/>
</dbReference>
<dbReference type="NCBIfam" id="TIGR00449">
    <property type="entry name" value="tgt_general"/>
    <property type="match status" value="1"/>
</dbReference>
<dbReference type="PANTHER" id="PTHR46499">
    <property type="entry name" value="QUEUINE TRNA-RIBOSYLTRANSFERASE"/>
    <property type="match status" value="1"/>
</dbReference>
<dbReference type="PANTHER" id="PTHR46499:SF1">
    <property type="entry name" value="QUEUINE TRNA-RIBOSYLTRANSFERASE"/>
    <property type="match status" value="1"/>
</dbReference>
<dbReference type="Pfam" id="PF01702">
    <property type="entry name" value="TGT"/>
    <property type="match status" value="1"/>
</dbReference>
<dbReference type="SUPFAM" id="SSF51713">
    <property type="entry name" value="tRNA-guanine transglycosylase"/>
    <property type="match status" value="1"/>
</dbReference>
<sequence length="372" mass="41453">MFEFEITSDCINTGARTGIFHTPNGKVNTPKFMPVGTLATVKGISSKQLISTGSEMILSNTFHLHLQPGEKLVKASGGIHKFMNWPKPILTDSGGYQVFSLAKLNNISDEGVEFKNPRDGSHVFLSPEKVIKIQMDLGSDVAMAFDHCPPHTANENDIEDSLERTHSWLQKCVETHQKSNQALFGIVQGGKYPRLREYSAKYTSSFDLPGIAVGGVSVGEAVEEIHSVINYVPKFLPINKPRYLMGIGSLKEISLAVANGFDIFDCVLPTRLGRHGTAFFNDERLNLRNARFKNDFSPIDKTCKCETCKSYSRAYLHHLIRNDEILGLSLISLHNIAHLIRFTNAISTAIRDNCFTNDFAPWKTSSIAHHTW</sequence>
<organism>
    <name type="scientific">Prochlorococcus marinus (strain MIT 9301)</name>
    <dbReference type="NCBI Taxonomy" id="167546"/>
    <lineage>
        <taxon>Bacteria</taxon>
        <taxon>Bacillati</taxon>
        <taxon>Cyanobacteriota</taxon>
        <taxon>Cyanophyceae</taxon>
        <taxon>Synechococcales</taxon>
        <taxon>Prochlorococcaceae</taxon>
        <taxon>Prochlorococcus</taxon>
    </lineage>
</organism>
<evidence type="ECO:0000255" key="1">
    <source>
        <dbReference type="HAMAP-Rule" id="MF_00168"/>
    </source>
</evidence>
<accession>A3PAZ2</accession>
<reference key="1">
    <citation type="journal article" date="2007" name="PLoS Genet.">
        <title>Patterns and implications of gene gain and loss in the evolution of Prochlorococcus.</title>
        <authorList>
            <person name="Kettler G.C."/>
            <person name="Martiny A.C."/>
            <person name="Huang K."/>
            <person name="Zucker J."/>
            <person name="Coleman M.L."/>
            <person name="Rodrigue S."/>
            <person name="Chen F."/>
            <person name="Lapidus A."/>
            <person name="Ferriera S."/>
            <person name="Johnson J."/>
            <person name="Steglich C."/>
            <person name="Church G.M."/>
            <person name="Richardson P."/>
            <person name="Chisholm S.W."/>
        </authorList>
    </citation>
    <scope>NUCLEOTIDE SEQUENCE [LARGE SCALE GENOMIC DNA]</scope>
    <source>
        <strain>MIT 9301</strain>
    </source>
</reference>
<comment type="function">
    <text evidence="1">Catalyzes the base-exchange of a guanine (G) residue with the queuine precursor 7-aminomethyl-7-deazaguanine (PreQ1) at position 34 (anticodon wobble position) in tRNAs with GU(N) anticodons (tRNA-Asp, -Asn, -His and -Tyr). Catalysis occurs through a double-displacement mechanism. The nucleophile active site attacks the C1' of nucleotide 34 to detach the guanine base from the RNA, forming a covalent enzyme-RNA intermediate. The proton acceptor active site deprotonates the incoming PreQ1, allowing a nucleophilic attack on the C1' of the ribose to form the product. After dissociation, two additional enzymatic reactions on the tRNA convert PreQ1 to queuine (Q), resulting in the hypermodified nucleoside queuosine (7-(((4,5-cis-dihydroxy-2-cyclopenten-1-yl)amino)methyl)-7-deazaguanosine).</text>
</comment>
<comment type="catalytic activity">
    <reaction evidence="1">
        <text>7-aminomethyl-7-carbaguanine + guanosine(34) in tRNA = 7-aminomethyl-7-carbaguanosine(34) in tRNA + guanine</text>
        <dbReference type="Rhea" id="RHEA:24104"/>
        <dbReference type="Rhea" id="RHEA-COMP:10341"/>
        <dbReference type="Rhea" id="RHEA-COMP:10342"/>
        <dbReference type="ChEBI" id="CHEBI:16235"/>
        <dbReference type="ChEBI" id="CHEBI:58703"/>
        <dbReference type="ChEBI" id="CHEBI:74269"/>
        <dbReference type="ChEBI" id="CHEBI:82833"/>
        <dbReference type="EC" id="2.4.2.29"/>
    </reaction>
</comment>
<comment type="cofactor">
    <cofactor evidence="1">
        <name>Zn(2+)</name>
        <dbReference type="ChEBI" id="CHEBI:29105"/>
    </cofactor>
    <text evidence="1">Binds 1 zinc ion per subunit.</text>
</comment>
<comment type="pathway">
    <text evidence="1">tRNA modification; tRNA-queuosine biosynthesis.</text>
</comment>
<comment type="subunit">
    <text evidence="1">Homodimer. Within each dimer, one monomer is responsible for RNA recognition and catalysis, while the other monomer binds to the replacement base PreQ1.</text>
</comment>
<comment type="similarity">
    <text evidence="1">Belongs to the queuine tRNA-ribosyltransferase family.</text>
</comment>
<proteinExistence type="inferred from homology"/>